<organism>
    <name type="scientific">Escherichia coli (strain K12)</name>
    <dbReference type="NCBI Taxonomy" id="83333"/>
    <lineage>
        <taxon>Bacteria</taxon>
        <taxon>Pseudomonadati</taxon>
        <taxon>Pseudomonadota</taxon>
        <taxon>Gammaproteobacteria</taxon>
        <taxon>Enterobacterales</taxon>
        <taxon>Enterobacteriaceae</taxon>
        <taxon>Escherichia</taxon>
    </lineage>
</organism>
<evidence type="ECO:0000305" key="1"/>
<evidence type="ECO:0000305" key="2">
    <source>
    </source>
</evidence>
<comment type="function">
    <text>Essential for F plasmid conjugative transfer, participates in F-pilus assembly.</text>
</comment>
<comment type="subcellular location">
    <subcellularLocation>
        <location evidence="2">Periplasm</location>
    </subcellularLocation>
</comment>
<comment type="caution">
    <text evidence="1">It is uncertain whether Met-1 or Met-5 is the initiator.</text>
</comment>
<keyword id="KW-0184">Conjugation</keyword>
<keyword id="KW-0574">Periplasm</keyword>
<keyword id="KW-0614">Plasmid</keyword>
<keyword id="KW-0732">Signal</keyword>
<accession>P18473</accession>
<sequence>MKLSMKSLAALLMMLNGAVMASENVNTPENRQFLKQQENLSRQLREKPDHQLKAWAEKQVLENPLQRSDNHFLDELVRKQQASQDGKPRQGALYFVSFSIPEEGLKRMLGETRHFGIPATLRGMVNNDLKTTAEAVLSLVKDGATDGVQIDPTLFSQYGIRTVPALVVFCSQGYDIIRGNLRVGQALEKVAATGDCRQVAHDLLAGKGDSGK</sequence>
<proteinExistence type="predicted"/>
<protein>
    <recommendedName>
        <fullName>Periplasmic protein TrbC</fullName>
    </recommendedName>
</protein>
<name>TRBC_ECOLI</name>
<geneLocation type="plasmid">
    <name>F</name>
</geneLocation>
<dbReference type="EMBL" id="M60427">
    <property type="protein sequence ID" value="AAA24914.1"/>
    <property type="molecule type" value="Genomic_DNA"/>
</dbReference>
<dbReference type="EMBL" id="U01159">
    <property type="protein sequence ID" value="AAC44205.1"/>
    <property type="molecule type" value="Genomic_DNA"/>
</dbReference>
<dbReference type="EMBL" id="AP001918">
    <property type="protein sequence ID" value="BAA97958.1"/>
    <property type="molecule type" value="Genomic_DNA"/>
</dbReference>
<dbReference type="EMBL" id="M34695">
    <property type="protein sequence ID" value="AAA98089.1"/>
    <property type="molecule type" value="Genomic_DNA"/>
</dbReference>
<dbReference type="EMBL" id="X61575">
    <property type="protein sequence ID" value="CAA43774.1"/>
    <property type="molecule type" value="Genomic_DNA"/>
</dbReference>
<dbReference type="PIR" id="A39442">
    <property type="entry name" value="A39442"/>
</dbReference>
<dbReference type="RefSeq" id="NP_061467.1">
    <property type="nucleotide sequence ID" value="NC_002483.1"/>
</dbReference>
<dbReference type="RefSeq" id="WP_000777688.1">
    <property type="nucleotide sequence ID" value="NZ_JACEFS010000047.1"/>
</dbReference>
<dbReference type="RefSeq" id="YP_009060143.1">
    <property type="nucleotide sequence ID" value="NC_024956.1"/>
</dbReference>
<dbReference type="RefSeq" id="YP_009070601.1">
    <property type="nucleotide sequence ID" value="NC_025175.1"/>
</dbReference>
<dbReference type="SMR" id="P18473"/>
<dbReference type="KEGG" id="ecoc:C3026_24540"/>
<dbReference type="PATRIC" id="fig|83333.107.peg.624"/>
<dbReference type="OrthoDB" id="6139428at2"/>
<dbReference type="PRO" id="PR:P18473"/>
<dbReference type="GO" id="GO:0042597">
    <property type="term" value="C:periplasmic space"/>
    <property type="evidence" value="ECO:0007669"/>
    <property type="project" value="UniProtKB-SubCell"/>
</dbReference>
<dbReference type="InterPro" id="IPR019106">
    <property type="entry name" value="T4SS_TrbC"/>
</dbReference>
<dbReference type="InterPro" id="IPR014113">
    <property type="entry name" value="T4SS_TrbC_subgr"/>
</dbReference>
<dbReference type="NCBIfam" id="NF010290">
    <property type="entry name" value="PRK13730.1"/>
    <property type="match status" value="1"/>
</dbReference>
<dbReference type="NCBIfam" id="TIGR02742">
    <property type="entry name" value="TrbC_Ftype"/>
    <property type="match status" value="1"/>
</dbReference>
<dbReference type="Pfam" id="PF09673">
    <property type="entry name" value="TrbC_Ftype"/>
    <property type="match status" value="1"/>
</dbReference>
<gene>
    <name type="primary">trbC</name>
    <name type="ordered locus">ECOK12F088</name>
</gene>
<feature type="signal peptide">
    <location>
        <begin position="1"/>
        <end position="21"/>
    </location>
</feature>
<feature type="chain" id="PRO_0000024512" description="Periplasmic protein TrbC">
    <location>
        <begin position="22"/>
        <end position="212"/>
    </location>
</feature>
<reference key="1">
    <citation type="journal article" date="1991" name="J. Bacteriol.">
        <title>Characterization of trbC, a new F plasmid tra operon gene that is essential to conjugative transfer.</title>
        <authorList>
            <person name="Maneewannakul S."/>
            <person name="Maneewannakul K."/>
            <person name="Ippen-Ihler K."/>
        </authorList>
    </citation>
    <scope>NUCLEOTIDE SEQUENCE [GENOMIC DNA]</scope>
    <source>
        <strain>K12</strain>
    </source>
</reference>
<reference key="2">
    <citation type="journal article" date="1994" name="Microbiol. Rev.">
        <title>Analysis of the sequence and gene products of the transfer region of the F sex factor.</title>
        <authorList>
            <person name="Frost L.S."/>
            <person name="Ippen-Ihler K."/>
            <person name="Skurray R.A."/>
        </authorList>
    </citation>
    <scope>NUCLEOTIDE SEQUENCE [GENOMIC DNA]</scope>
</reference>
<reference key="3">
    <citation type="submission" date="2000-04" db="EMBL/GenBank/DDBJ databases">
        <title>Complete nucleotide sequence of the F plasmid: its implications for organization and diversification of plasmid genomes.</title>
        <authorList>
            <person name="Shimizu H."/>
            <person name="Saitoh Y."/>
            <person name="Suda Y."/>
            <person name="Uehara K."/>
            <person name="Sampei G."/>
            <person name="Mizobuchi K."/>
        </authorList>
    </citation>
    <scope>NUCLEOTIDE SEQUENCE [LARGE SCALE GENOMIC DNA]</scope>
    <source>
        <strain>K12 / CR63</strain>
    </source>
</reference>
<reference key="4">
    <citation type="journal article" date="1990" name="J. Bacteriol.">
        <title>Characterization of the F-plasmid conjugative transfer gene traU.</title>
        <authorList>
            <person name="Moore D."/>
            <person name="Maneewannakul K."/>
            <person name="Maneewannakul S."/>
            <person name="Wu J.H."/>
            <person name="Ippen-Ihler K."/>
            <person name="Bradley D.E."/>
        </authorList>
    </citation>
    <scope>NUCLEOTIDE SEQUENCE [GENOMIC DNA] OF 1-11</scope>
    <source>
        <strain>K12</strain>
    </source>
</reference>
<reference key="5">
    <citation type="journal article" date="1992" name="J. Mol. Biol.">
        <title>Characterization of the F plasmid mating aggregation gene traN and of a new F transfer region locus trbE.</title>
        <authorList>
            <person name="Maneewannakul S."/>
            <person name="Kathir P."/>
            <person name="Ippen-Ihler K."/>
        </authorList>
    </citation>
    <scope>NUCLEOTIDE SEQUENCE [GENOMIC DNA] OF 170-212</scope>
    <scope>SUBCELLULAR LOCATION</scope>
    <source>
        <strain>K12</strain>
        <plasmid>F</plasmid>
    </source>
</reference>